<organism>
    <name type="scientific">Acidothermus cellulolyticus (strain ATCC 43068 / DSM 8971 / 11B)</name>
    <dbReference type="NCBI Taxonomy" id="351607"/>
    <lineage>
        <taxon>Bacteria</taxon>
        <taxon>Bacillati</taxon>
        <taxon>Actinomycetota</taxon>
        <taxon>Actinomycetes</taxon>
        <taxon>Acidothermales</taxon>
        <taxon>Acidothermaceae</taxon>
        <taxon>Acidothermus</taxon>
    </lineage>
</organism>
<keyword id="KW-1185">Reference proteome</keyword>
<keyword id="KW-0687">Ribonucleoprotein</keyword>
<keyword id="KW-0689">Ribosomal protein</keyword>
<evidence type="ECO:0000255" key="1">
    <source>
        <dbReference type="HAMAP-Rule" id="MF_00391"/>
    </source>
</evidence>
<evidence type="ECO:0000305" key="2"/>
<proteinExistence type="inferred from homology"/>
<dbReference type="EMBL" id="CP000481">
    <property type="protein sequence ID" value="ABK53933.1"/>
    <property type="molecule type" value="Genomic_DNA"/>
</dbReference>
<dbReference type="RefSeq" id="WP_011720996.1">
    <property type="nucleotide sequence ID" value="NC_008578.1"/>
</dbReference>
<dbReference type="SMR" id="A0LWX3"/>
<dbReference type="FunCoup" id="A0LWX3">
    <property type="interactions" value="82"/>
</dbReference>
<dbReference type="STRING" id="351607.Acel_2161"/>
<dbReference type="KEGG" id="ace:Acel_2161"/>
<dbReference type="eggNOG" id="COG0230">
    <property type="taxonomic scope" value="Bacteria"/>
</dbReference>
<dbReference type="HOGENOM" id="CLU_129938_2_1_11"/>
<dbReference type="InParanoid" id="A0LWX3"/>
<dbReference type="Proteomes" id="UP000008221">
    <property type="component" value="Chromosome"/>
</dbReference>
<dbReference type="GO" id="GO:1990904">
    <property type="term" value="C:ribonucleoprotein complex"/>
    <property type="evidence" value="ECO:0007669"/>
    <property type="project" value="UniProtKB-KW"/>
</dbReference>
<dbReference type="GO" id="GO:0005840">
    <property type="term" value="C:ribosome"/>
    <property type="evidence" value="ECO:0007669"/>
    <property type="project" value="UniProtKB-KW"/>
</dbReference>
<dbReference type="GO" id="GO:0003735">
    <property type="term" value="F:structural constituent of ribosome"/>
    <property type="evidence" value="ECO:0007669"/>
    <property type="project" value="InterPro"/>
</dbReference>
<dbReference type="GO" id="GO:0006412">
    <property type="term" value="P:translation"/>
    <property type="evidence" value="ECO:0007669"/>
    <property type="project" value="UniProtKB-UniRule"/>
</dbReference>
<dbReference type="FunFam" id="1.10.287.3980:FF:000001">
    <property type="entry name" value="Mitochondrial ribosomal protein L34"/>
    <property type="match status" value="1"/>
</dbReference>
<dbReference type="Gene3D" id="1.10.287.3980">
    <property type="match status" value="1"/>
</dbReference>
<dbReference type="HAMAP" id="MF_00391">
    <property type="entry name" value="Ribosomal_bL34"/>
    <property type="match status" value="1"/>
</dbReference>
<dbReference type="InterPro" id="IPR000271">
    <property type="entry name" value="Ribosomal_bL34"/>
</dbReference>
<dbReference type="InterPro" id="IPR020939">
    <property type="entry name" value="Ribosomal_bL34_CS"/>
</dbReference>
<dbReference type="NCBIfam" id="TIGR01030">
    <property type="entry name" value="rpmH_bact"/>
    <property type="match status" value="1"/>
</dbReference>
<dbReference type="PANTHER" id="PTHR14503:SF4">
    <property type="entry name" value="LARGE RIBOSOMAL SUBUNIT PROTEIN BL34M"/>
    <property type="match status" value="1"/>
</dbReference>
<dbReference type="PANTHER" id="PTHR14503">
    <property type="entry name" value="MITOCHONDRIAL RIBOSOMAL PROTEIN 34 FAMILY MEMBER"/>
    <property type="match status" value="1"/>
</dbReference>
<dbReference type="Pfam" id="PF00468">
    <property type="entry name" value="Ribosomal_L34"/>
    <property type="match status" value="1"/>
</dbReference>
<dbReference type="PROSITE" id="PS00784">
    <property type="entry name" value="RIBOSOMAL_L34"/>
    <property type="match status" value="1"/>
</dbReference>
<comment type="similarity">
    <text evidence="1">Belongs to the bacterial ribosomal protein bL34 family.</text>
</comment>
<protein>
    <recommendedName>
        <fullName evidence="1">Large ribosomal subunit protein bL34</fullName>
    </recommendedName>
    <alternativeName>
        <fullName evidence="2">50S ribosomal protein L34</fullName>
    </alternativeName>
</protein>
<feature type="chain" id="PRO_1000013262" description="Large ribosomal subunit protein bL34">
    <location>
        <begin position="1"/>
        <end position="45"/>
    </location>
</feature>
<gene>
    <name evidence="1" type="primary">rpmH</name>
    <name type="ordered locus">Acel_2161</name>
</gene>
<sequence>MSKRTYQPNNRRRAKTHGFRVRMRTRAGRAIIAARRRKGRRELTA</sequence>
<name>RL34_ACIC1</name>
<reference key="1">
    <citation type="journal article" date="2009" name="Genome Res.">
        <title>Complete genome of the cellulolytic thermophile Acidothermus cellulolyticus 11B provides insights into its ecophysiological and evolutionary adaptations.</title>
        <authorList>
            <person name="Barabote R.D."/>
            <person name="Xie G."/>
            <person name="Leu D.H."/>
            <person name="Normand P."/>
            <person name="Necsulea A."/>
            <person name="Daubin V."/>
            <person name="Medigue C."/>
            <person name="Adney W.S."/>
            <person name="Xu X.C."/>
            <person name="Lapidus A."/>
            <person name="Parales R.E."/>
            <person name="Detter C."/>
            <person name="Pujic P."/>
            <person name="Bruce D."/>
            <person name="Lavire C."/>
            <person name="Challacombe J.F."/>
            <person name="Brettin T.S."/>
            <person name="Berry A.M."/>
        </authorList>
    </citation>
    <scope>NUCLEOTIDE SEQUENCE [LARGE SCALE GENOMIC DNA]</scope>
    <source>
        <strain>ATCC 43068 / DSM 8971 / 11B</strain>
    </source>
</reference>
<accession>A0LWX3</accession>